<dbReference type="EMBL" id="AF528892">
    <property type="protein sequence ID" value="AAQ09354.1"/>
    <property type="molecule type" value="Genomic_DNA"/>
</dbReference>
<dbReference type="SMR" id="Q6EYL9"/>
<dbReference type="GO" id="GO:0009535">
    <property type="term" value="C:chloroplast thylakoid membrane"/>
    <property type="evidence" value="ECO:0007669"/>
    <property type="project" value="UniProtKB-SubCell"/>
</dbReference>
<dbReference type="GO" id="GO:0009539">
    <property type="term" value="C:photosystem II reaction center"/>
    <property type="evidence" value="ECO:0007669"/>
    <property type="project" value="InterPro"/>
</dbReference>
<dbReference type="GO" id="GO:0015979">
    <property type="term" value="P:photosynthesis"/>
    <property type="evidence" value="ECO:0007669"/>
    <property type="project" value="UniProtKB-UniRule"/>
</dbReference>
<dbReference type="HAMAP" id="MF_00808">
    <property type="entry name" value="PSII_PsbT"/>
    <property type="match status" value="1"/>
</dbReference>
<dbReference type="InterPro" id="IPR001743">
    <property type="entry name" value="PSII_PsbT"/>
</dbReference>
<dbReference type="InterPro" id="IPR037268">
    <property type="entry name" value="PSII_PsbT_sf"/>
</dbReference>
<dbReference type="PANTHER" id="PTHR36411">
    <property type="match status" value="1"/>
</dbReference>
<dbReference type="PANTHER" id="PTHR36411:SF2">
    <property type="entry name" value="PHOTOSYSTEM II REACTION CENTER PROTEIN T"/>
    <property type="match status" value="1"/>
</dbReference>
<dbReference type="Pfam" id="PF01405">
    <property type="entry name" value="PsbT"/>
    <property type="match status" value="1"/>
</dbReference>
<dbReference type="SUPFAM" id="SSF161029">
    <property type="entry name" value="Photosystem II reaction center protein T, PsbT"/>
    <property type="match status" value="1"/>
</dbReference>
<organism>
    <name type="scientific">Agathis robusta</name>
    <name type="common">Queensland kauri pine</name>
    <dbReference type="NCBI Taxonomy" id="60854"/>
    <lineage>
        <taxon>Eukaryota</taxon>
        <taxon>Viridiplantae</taxon>
        <taxon>Streptophyta</taxon>
        <taxon>Embryophyta</taxon>
        <taxon>Tracheophyta</taxon>
        <taxon>Spermatophyta</taxon>
        <taxon>Pinopsida</taxon>
        <taxon>Pinidae</taxon>
        <taxon>Conifers II</taxon>
        <taxon>Araucariales</taxon>
        <taxon>Araucariaceae</taxon>
        <taxon>Agathis</taxon>
    </lineage>
</organism>
<sequence length="35" mass="3974">MEALVYTFLLVSTLGIIFFAIFFREPPKVPDRGGK</sequence>
<feature type="chain" id="PRO_0000217894" description="Photosystem II reaction center protein T">
    <location>
        <begin position="1"/>
        <end position="35"/>
    </location>
</feature>
<feature type="transmembrane region" description="Helical" evidence="1">
    <location>
        <begin position="3"/>
        <end position="23"/>
    </location>
</feature>
<evidence type="ECO:0000255" key="1">
    <source>
        <dbReference type="HAMAP-Rule" id="MF_00808"/>
    </source>
</evidence>
<protein>
    <recommendedName>
        <fullName evidence="1">Photosystem II reaction center protein T</fullName>
        <shortName evidence="1">PSII-T</shortName>
    </recommendedName>
</protein>
<name>PSBT_AGARO</name>
<reference key="1">
    <citation type="submission" date="2002-07" db="EMBL/GenBank/DDBJ databases">
        <title>Parsing out signal and noise for seed-plant phylogenetic inference.</title>
        <authorList>
            <person name="Graham S.W."/>
            <person name="Rai H.S."/>
            <person name="Ikegami K."/>
            <person name="Reeves P.A."/>
            <person name="Olmstead R.G."/>
        </authorList>
    </citation>
    <scope>NUCLEOTIDE SEQUENCE [GENOMIC DNA]</scope>
</reference>
<keyword id="KW-0150">Chloroplast</keyword>
<keyword id="KW-0472">Membrane</keyword>
<keyword id="KW-0602">Photosynthesis</keyword>
<keyword id="KW-0604">Photosystem II</keyword>
<keyword id="KW-0934">Plastid</keyword>
<keyword id="KW-0793">Thylakoid</keyword>
<keyword id="KW-0812">Transmembrane</keyword>
<keyword id="KW-1133">Transmembrane helix</keyword>
<gene>
    <name evidence="1" type="primary">psbT</name>
</gene>
<comment type="function">
    <text evidence="1">Found at the monomer-monomer interface of the photosystem II (PS II) dimer, plays a role in assembly and dimerization of PSII. PSII is a light-driven water plastoquinone oxidoreductase, using light energy to abstract electrons from H(2)O, generating a proton gradient subsequently used for ATP formation.</text>
</comment>
<comment type="subunit">
    <text evidence="1">PSII is composed of 1 copy each of membrane proteins PsbA, PsbB, PsbC, PsbD, PsbE, PsbF, PsbH, PsbI, PsbJ, PsbK, PsbL, PsbM, PsbT, PsbY, PsbZ, Psb30/Ycf12, at least 3 peripheral proteins of the oxygen-evolving complex and a large number of cofactors. It forms dimeric complexes.</text>
</comment>
<comment type="subcellular location">
    <subcellularLocation>
        <location evidence="1">Plastid</location>
        <location evidence="1">Chloroplast thylakoid membrane</location>
        <topology evidence="1">Single-pass membrane protein</topology>
    </subcellularLocation>
</comment>
<comment type="similarity">
    <text evidence="1">Belongs to the PsbT family.</text>
</comment>
<accession>Q6EYL9</accession>
<proteinExistence type="inferred from homology"/>
<geneLocation type="chloroplast"/>